<comment type="function">
    <text evidence="1">May hydrolyze 6-aminopenicillinic acid and 7-aminocephalosporanic acid (ACA) derivatives. Binds to penicillin (By similarity).</text>
</comment>
<comment type="catalytic activity">
    <reaction>
        <text>a beta-lactam + H2O = a substituted beta-amino acid</text>
        <dbReference type="Rhea" id="RHEA:20401"/>
        <dbReference type="ChEBI" id="CHEBI:15377"/>
        <dbReference type="ChEBI" id="CHEBI:35627"/>
        <dbReference type="ChEBI" id="CHEBI:140347"/>
        <dbReference type="EC" id="3.5.2.6"/>
    </reaction>
</comment>
<comment type="subcellular location">
    <subcellularLocation>
        <location evidence="1">Secreted</location>
    </subcellularLocation>
</comment>
<comment type="similarity">
    <text evidence="4">Belongs to the hcp beta-lactamase family.</text>
</comment>
<sequence length="305" mass="33807">MIKSWTKKWFLILFLMASCFGHLVATTGEKYFKMANQALKRGDYHRAVAFYKRSCNLRMGVGCTSLGSMYEYGDGVDQNISKAVFYYRRGCNLRNHLACASLGSMYEDGDGVQKDFPKAIYYYRRGCHLKGGVSCGSLGFMYFNGTGVKQNYAKALSFSKYACSLNYGISCNFVGYMYKSAKGVEKDLKKALANFKRGCHLKDGASCVSLGYLYEAGMDVKQNEEQALNLYKKGCSLKEGSGCHNVAVMYYTGKGAPKDLEKATSYYKKGCALGFSGSCKVLEVIGKESDNLQDDAQNDTQDSVQ</sequence>
<keyword id="KW-0046">Antibiotic resistance</keyword>
<keyword id="KW-1015">Disulfide bond</keyword>
<keyword id="KW-0378">Hydrolase</keyword>
<keyword id="KW-0677">Repeat</keyword>
<keyword id="KW-0964">Secreted</keyword>
<keyword id="KW-0732">Signal</keyword>
<keyword id="KW-0802">TPR repeat</keyword>
<evidence type="ECO:0000250" key="1"/>
<evidence type="ECO:0000255" key="2"/>
<evidence type="ECO:0000255" key="3">
    <source>
        <dbReference type="PROSITE-ProRule" id="PRU00303"/>
    </source>
</evidence>
<evidence type="ECO:0000305" key="4"/>
<proteinExistence type="inferred from homology"/>
<accession>Q9ZMS0</accession>
<feature type="signal peptide" evidence="3">
    <location>
        <begin position="1"/>
        <end position="27"/>
    </location>
</feature>
<feature type="chain" id="PRO_0000013199" description="Putative beta-lactamase HcpD">
    <location>
        <begin position="28"/>
        <end position="305"/>
    </location>
</feature>
<feature type="repeat" description="TPR 1">
    <location>
        <begin position="28"/>
        <end position="61"/>
    </location>
</feature>
<feature type="repeat" description="TPR 2">
    <location>
        <begin position="96"/>
        <end position="133"/>
    </location>
</feature>
<feature type="repeat" description="TPR 3">
    <location>
        <begin position="168"/>
        <end position="205"/>
    </location>
</feature>
<feature type="repeat" description="TPR 4">
    <location>
        <begin position="240"/>
        <end position="277"/>
    </location>
</feature>
<feature type="disulfide bond" evidence="2">
    <location>
        <begin position="55"/>
        <end position="63"/>
    </location>
</feature>
<feature type="disulfide bond" evidence="2">
    <location>
        <begin position="91"/>
        <end position="99"/>
    </location>
</feature>
<feature type="disulfide bond" evidence="2">
    <location>
        <begin position="127"/>
        <end position="135"/>
    </location>
</feature>
<feature type="disulfide bond" evidence="2">
    <location>
        <begin position="163"/>
        <end position="171"/>
    </location>
</feature>
<feature type="disulfide bond" evidence="2">
    <location>
        <begin position="199"/>
        <end position="207"/>
    </location>
</feature>
<feature type="disulfide bond" evidence="2">
    <location>
        <begin position="235"/>
        <end position="243"/>
    </location>
</feature>
<feature type="disulfide bond" evidence="2">
    <location>
        <begin position="271"/>
        <end position="279"/>
    </location>
</feature>
<gene>
    <name type="primary">hcpD</name>
    <name type="ordered locus">jhp_0148</name>
</gene>
<dbReference type="EC" id="3.5.2.6"/>
<dbReference type="EMBL" id="AE001439">
    <property type="protein sequence ID" value="AAD05729.1"/>
    <property type="molecule type" value="Genomic_DNA"/>
</dbReference>
<dbReference type="PIR" id="F71968">
    <property type="entry name" value="F71968"/>
</dbReference>
<dbReference type="RefSeq" id="WP_000597796.1">
    <property type="nucleotide sequence ID" value="NC_000921.1"/>
</dbReference>
<dbReference type="SMR" id="Q9ZMS0"/>
<dbReference type="KEGG" id="hpj:jhp_0148"/>
<dbReference type="eggNOG" id="COG0790">
    <property type="taxonomic scope" value="Bacteria"/>
</dbReference>
<dbReference type="Proteomes" id="UP000000804">
    <property type="component" value="Chromosome"/>
</dbReference>
<dbReference type="GO" id="GO:0005576">
    <property type="term" value="C:extracellular region"/>
    <property type="evidence" value="ECO:0007669"/>
    <property type="project" value="UniProtKB-SubCell"/>
</dbReference>
<dbReference type="GO" id="GO:0008800">
    <property type="term" value="F:beta-lactamase activity"/>
    <property type="evidence" value="ECO:0007669"/>
    <property type="project" value="UniProtKB-EC"/>
</dbReference>
<dbReference type="GO" id="GO:0046677">
    <property type="term" value="P:response to antibiotic"/>
    <property type="evidence" value="ECO:0007669"/>
    <property type="project" value="UniProtKB-KW"/>
</dbReference>
<dbReference type="Gene3D" id="1.25.40.10">
    <property type="entry name" value="Tetratricopeptide repeat domain"/>
    <property type="match status" value="1"/>
</dbReference>
<dbReference type="InterPro" id="IPR040239">
    <property type="entry name" value="HcpB-like"/>
</dbReference>
<dbReference type="InterPro" id="IPR006597">
    <property type="entry name" value="Sel1-like"/>
</dbReference>
<dbReference type="InterPro" id="IPR011990">
    <property type="entry name" value="TPR-like_helical_dom_sf"/>
</dbReference>
<dbReference type="PANTHER" id="PTHR13891">
    <property type="entry name" value="CYTOCHROME C OXIDASE ASSEMBLY FACTOR 7"/>
    <property type="match status" value="1"/>
</dbReference>
<dbReference type="PANTHER" id="PTHR13891:SF1">
    <property type="entry name" value="CYTOCHROME C OXIDASE ASSEMBLY FACTOR 7"/>
    <property type="match status" value="1"/>
</dbReference>
<dbReference type="Pfam" id="PF08238">
    <property type="entry name" value="Sel1"/>
    <property type="match status" value="7"/>
</dbReference>
<dbReference type="SMART" id="SM00671">
    <property type="entry name" value="SEL1"/>
    <property type="match status" value="7"/>
</dbReference>
<dbReference type="SUPFAM" id="SSF81901">
    <property type="entry name" value="HCP-like"/>
    <property type="match status" value="1"/>
</dbReference>
<dbReference type="PROSITE" id="PS51257">
    <property type="entry name" value="PROKAR_LIPOPROTEIN"/>
    <property type="match status" value="1"/>
</dbReference>
<name>HCPD_HELPJ</name>
<organism>
    <name type="scientific">Helicobacter pylori (strain J99 / ATCC 700824)</name>
    <name type="common">Campylobacter pylori J99</name>
    <dbReference type="NCBI Taxonomy" id="85963"/>
    <lineage>
        <taxon>Bacteria</taxon>
        <taxon>Pseudomonadati</taxon>
        <taxon>Campylobacterota</taxon>
        <taxon>Epsilonproteobacteria</taxon>
        <taxon>Campylobacterales</taxon>
        <taxon>Helicobacteraceae</taxon>
        <taxon>Helicobacter</taxon>
    </lineage>
</organism>
<reference key="1">
    <citation type="journal article" date="1999" name="Nature">
        <title>Genomic sequence comparison of two unrelated isolates of the human gastric pathogen Helicobacter pylori.</title>
        <authorList>
            <person name="Alm R.A."/>
            <person name="Ling L.-S.L."/>
            <person name="Moir D.T."/>
            <person name="King B.L."/>
            <person name="Brown E.D."/>
            <person name="Doig P.C."/>
            <person name="Smith D.R."/>
            <person name="Noonan B."/>
            <person name="Guild B.C."/>
            <person name="deJonge B.L."/>
            <person name="Carmel G."/>
            <person name="Tummino P.J."/>
            <person name="Caruso A."/>
            <person name="Uria-Nickelsen M."/>
            <person name="Mills D.M."/>
            <person name="Ives C."/>
            <person name="Gibson R."/>
            <person name="Merberg D."/>
            <person name="Mills S.D."/>
            <person name="Jiang Q."/>
            <person name="Taylor D.E."/>
            <person name="Vovis G.F."/>
            <person name="Trust T.J."/>
        </authorList>
    </citation>
    <scope>NUCLEOTIDE SEQUENCE [LARGE SCALE GENOMIC DNA]</scope>
    <source>
        <strain>J99 / ATCC 700824</strain>
    </source>
</reference>
<protein>
    <recommendedName>
        <fullName>Putative beta-lactamase HcpD</fullName>
        <ecNumber>3.5.2.6</ecNumber>
    </recommendedName>
    <alternativeName>
        <fullName>Cysteine-rich protein D</fullName>
    </alternativeName>
    <alternativeName>
        <fullName>Penicillin-binding protein 4</fullName>
        <shortName>PBP 4</shortName>
    </alternativeName>
</protein>